<evidence type="ECO:0000255" key="1">
    <source>
        <dbReference type="HAMAP-Rule" id="MF_00065"/>
    </source>
</evidence>
<reference key="1">
    <citation type="journal article" date="2011" name="Proc. Natl. Acad. Sci. U.S.A.">
        <title>Genomic anatomy of Escherichia coli O157:H7 outbreaks.</title>
        <authorList>
            <person name="Eppinger M."/>
            <person name="Mammel M.K."/>
            <person name="Leclerc J.E."/>
            <person name="Ravel J."/>
            <person name="Cebula T.A."/>
        </authorList>
    </citation>
    <scope>NUCLEOTIDE SEQUENCE [LARGE SCALE GENOMIC DNA]</scope>
    <source>
        <strain>EC4115 / EHEC</strain>
    </source>
</reference>
<protein>
    <recommendedName>
        <fullName evidence="1">Adenylyl-sulfate kinase</fullName>
        <ecNumber evidence="1">2.7.1.25</ecNumber>
    </recommendedName>
    <alternativeName>
        <fullName evidence="1">APS kinase</fullName>
    </alternativeName>
    <alternativeName>
        <fullName evidence="1">ATP adenosine-5'-phosphosulfate 3'-phosphotransferase</fullName>
    </alternativeName>
    <alternativeName>
        <fullName evidence="1">Adenosine-5'-phosphosulfate kinase</fullName>
    </alternativeName>
</protein>
<sequence length="201" mass="22321">MALHDENVVWHSHPVTVQQRELHHGHRGVVLWFTGLSGSGKSTVAGALEEALHKLGVSTYLLDGDNVRHGLCSDLGFSDADRKENIRRVGEVANLMVEAGLVVLTAFISPHRAERQMVRERVGEGRFIEVFVDTPLAICEARDPKGLYKKARAGELRNFTGIDSVYEAPESAEIHLNGEQLVTNLVQQLLDLLRQNDIIRS</sequence>
<gene>
    <name evidence="1" type="primary">cysC</name>
    <name type="ordered locus">ECH74115_4002</name>
</gene>
<name>CYSC_ECO5E</name>
<keyword id="KW-0067">ATP-binding</keyword>
<keyword id="KW-0418">Kinase</keyword>
<keyword id="KW-0547">Nucleotide-binding</keyword>
<keyword id="KW-0597">Phosphoprotein</keyword>
<keyword id="KW-0808">Transferase</keyword>
<accession>B5Z3B2</accession>
<comment type="function">
    <text evidence="1">Catalyzes the synthesis of activated sulfate.</text>
</comment>
<comment type="catalytic activity">
    <reaction evidence="1">
        <text>adenosine 5'-phosphosulfate + ATP = 3'-phosphoadenylyl sulfate + ADP + H(+)</text>
        <dbReference type="Rhea" id="RHEA:24152"/>
        <dbReference type="ChEBI" id="CHEBI:15378"/>
        <dbReference type="ChEBI" id="CHEBI:30616"/>
        <dbReference type="ChEBI" id="CHEBI:58243"/>
        <dbReference type="ChEBI" id="CHEBI:58339"/>
        <dbReference type="ChEBI" id="CHEBI:456216"/>
        <dbReference type="EC" id="2.7.1.25"/>
    </reaction>
</comment>
<comment type="pathway">
    <text evidence="1">Sulfur metabolism; hydrogen sulfide biosynthesis; sulfite from sulfate: step 2/3.</text>
</comment>
<comment type="similarity">
    <text evidence="1">Belongs to the APS kinase family.</text>
</comment>
<feature type="chain" id="PRO_1000092239" description="Adenylyl-sulfate kinase">
    <location>
        <begin position="1"/>
        <end position="201"/>
    </location>
</feature>
<feature type="active site" description="Phosphoserine intermediate" evidence="1">
    <location>
        <position position="109"/>
    </location>
</feature>
<feature type="binding site" evidence="1">
    <location>
        <begin position="35"/>
        <end position="42"/>
    </location>
    <ligand>
        <name>ATP</name>
        <dbReference type="ChEBI" id="CHEBI:30616"/>
    </ligand>
</feature>
<dbReference type="EC" id="2.7.1.25" evidence="1"/>
<dbReference type="EMBL" id="CP001164">
    <property type="protein sequence ID" value="ACI38246.1"/>
    <property type="molecule type" value="Genomic_DNA"/>
</dbReference>
<dbReference type="RefSeq" id="WP_001173673.1">
    <property type="nucleotide sequence ID" value="NC_011353.1"/>
</dbReference>
<dbReference type="SMR" id="B5Z3B2"/>
<dbReference type="GeneID" id="93779256"/>
<dbReference type="KEGG" id="ecf:ECH74115_4002"/>
<dbReference type="HOGENOM" id="CLU_046932_1_0_6"/>
<dbReference type="UniPathway" id="UPA00140">
    <property type="reaction ID" value="UER00205"/>
</dbReference>
<dbReference type="GO" id="GO:0004020">
    <property type="term" value="F:adenylylsulfate kinase activity"/>
    <property type="evidence" value="ECO:0007669"/>
    <property type="project" value="UniProtKB-UniRule"/>
</dbReference>
<dbReference type="GO" id="GO:0005524">
    <property type="term" value="F:ATP binding"/>
    <property type="evidence" value="ECO:0007669"/>
    <property type="project" value="UniProtKB-UniRule"/>
</dbReference>
<dbReference type="GO" id="GO:0070814">
    <property type="term" value="P:hydrogen sulfide biosynthetic process"/>
    <property type="evidence" value="ECO:0007669"/>
    <property type="project" value="UniProtKB-UniRule"/>
</dbReference>
<dbReference type="GO" id="GO:0000103">
    <property type="term" value="P:sulfate assimilation"/>
    <property type="evidence" value="ECO:0007669"/>
    <property type="project" value="UniProtKB-UniRule"/>
</dbReference>
<dbReference type="CDD" id="cd02027">
    <property type="entry name" value="APSK"/>
    <property type="match status" value="1"/>
</dbReference>
<dbReference type="FunFam" id="3.40.50.300:FF:000212">
    <property type="entry name" value="Adenylyl-sulfate kinase"/>
    <property type="match status" value="1"/>
</dbReference>
<dbReference type="Gene3D" id="3.40.50.300">
    <property type="entry name" value="P-loop containing nucleotide triphosphate hydrolases"/>
    <property type="match status" value="1"/>
</dbReference>
<dbReference type="HAMAP" id="MF_00065">
    <property type="entry name" value="Adenylyl_sulf_kinase"/>
    <property type="match status" value="1"/>
</dbReference>
<dbReference type="InterPro" id="IPR002891">
    <property type="entry name" value="APS_kinase"/>
</dbReference>
<dbReference type="InterPro" id="IPR027417">
    <property type="entry name" value="P-loop_NTPase"/>
</dbReference>
<dbReference type="NCBIfam" id="TIGR00455">
    <property type="entry name" value="apsK"/>
    <property type="match status" value="1"/>
</dbReference>
<dbReference type="NCBIfam" id="NF003013">
    <property type="entry name" value="PRK03846.1"/>
    <property type="match status" value="1"/>
</dbReference>
<dbReference type="PANTHER" id="PTHR11055:SF63">
    <property type="entry name" value="ADENYLYL-SULFATE KINASE 1, CHLOROPLASTIC"/>
    <property type="match status" value="1"/>
</dbReference>
<dbReference type="PANTHER" id="PTHR11055">
    <property type="entry name" value="BIFUNCTIONAL 3'-PHOSPHOADENOSINE 5'-PHOSPHOSULFATE SYNTHASE"/>
    <property type="match status" value="1"/>
</dbReference>
<dbReference type="Pfam" id="PF01583">
    <property type="entry name" value="APS_kinase"/>
    <property type="match status" value="1"/>
</dbReference>
<dbReference type="SUPFAM" id="SSF52540">
    <property type="entry name" value="P-loop containing nucleoside triphosphate hydrolases"/>
    <property type="match status" value="1"/>
</dbReference>
<proteinExistence type="inferred from homology"/>
<organism>
    <name type="scientific">Escherichia coli O157:H7 (strain EC4115 / EHEC)</name>
    <dbReference type="NCBI Taxonomy" id="444450"/>
    <lineage>
        <taxon>Bacteria</taxon>
        <taxon>Pseudomonadati</taxon>
        <taxon>Pseudomonadota</taxon>
        <taxon>Gammaproteobacteria</taxon>
        <taxon>Enterobacterales</taxon>
        <taxon>Enterobacteriaceae</taxon>
        <taxon>Escherichia</taxon>
    </lineage>
</organism>